<comment type="subcellular location">
    <subcellularLocation>
        <location evidence="4">Secreted</location>
    </subcellularLocation>
</comment>
<comment type="tissue specificity">
    <text evidence="4">Expressed by the venom gland.</text>
</comment>
<comment type="PTM">
    <text evidence="3">Contains 6 disulfide bonds.</text>
</comment>
<comment type="similarity">
    <text evidence="3">Belongs to the scoloptoxin-19 family.</text>
</comment>
<comment type="online information" name="National Center for Biotechnology Information (NCBI)">
    <link uri="https://www.ncbi.nlm.nih.gov/nuccore/GASH01000169"/>
</comment>
<dbReference type="SMR" id="P0DQE9"/>
<dbReference type="GO" id="GO:0005576">
    <property type="term" value="C:extracellular region"/>
    <property type="evidence" value="ECO:0007669"/>
    <property type="project" value="UniProtKB-SubCell"/>
</dbReference>
<dbReference type="GO" id="GO:0090729">
    <property type="term" value="F:toxin activity"/>
    <property type="evidence" value="ECO:0007669"/>
    <property type="project" value="UniProtKB-KW"/>
</dbReference>
<dbReference type="Gene3D" id="2.20.20.10">
    <property type="entry name" value="Anthopleurin-A"/>
    <property type="match status" value="1"/>
</dbReference>
<dbReference type="InterPro" id="IPR023355">
    <property type="entry name" value="Myo_ane_neurotoxin_sf"/>
</dbReference>
<dbReference type="SUPFAM" id="SSF57392">
    <property type="entry name" value="Defensin-like"/>
    <property type="match status" value="1"/>
</dbReference>
<evidence type="ECO:0000255" key="1"/>
<evidence type="ECO:0000303" key="2">
    <source>
    </source>
</evidence>
<evidence type="ECO:0000305" key="3"/>
<evidence type="ECO:0000305" key="4">
    <source>
    </source>
</evidence>
<reference key="1">
    <citation type="journal article" date="2014" name="Mol. Biol. Evol.">
        <title>Clawing through evolution: toxin diversification and convergence in the ancient lineage Chilopoda (centipedes).</title>
        <authorList>
            <person name="Undheim E.A."/>
            <person name="Jones A."/>
            <person name="Clauser K.R."/>
            <person name="Holland J.W."/>
            <person name="Pineda S.S."/>
            <person name="King G.F."/>
            <person name="Fry B.G."/>
        </authorList>
    </citation>
    <scope>NUCLEOTIDE SEQUENCE [MRNA]</scope>
    <scope>NOMENCLATURE</scope>
    <source>
        <tissue>Venom gland</tissue>
    </source>
</reference>
<keyword id="KW-1015">Disulfide bond</keyword>
<keyword id="KW-0964">Secreted</keyword>
<keyword id="KW-0732">Signal</keyword>
<keyword id="KW-0800">Toxin</keyword>
<proteinExistence type="inferred from homology"/>
<protein>
    <recommendedName>
        <fullName evidence="2">U-scoloptoxin(19)-Sm1a</fullName>
        <shortName evidence="2">U-SLPTX(19)-Sm1a</shortName>
    </recommendedName>
</protein>
<organism>
    <name type="scientific">Scolopendra morsitans</name>
    <name type="common">Tanzanian blue ringleg centipede</name>
    <dbReference type="NCBI Taxonomy" id="943129"/>
    <lineage>
        <taxon>Eukaryota</taxon>
        <taxon>Metazoa</taxon>
        <taxon>Ecdysozoa</taxon>
        <taxon>Arthropoda</taxon>
        <taxon>Myriapoda</taxon>
        <taxon>Chilopoda</taxon>
        <taxon>Pleurostigmophora</taxon>
        <taxon>Scolopendromorpha</taxon>
        <taxon>Scolopendridae</taxon>
        <taxon>Scolopendra</taxon>
    </lineage>
</organism>
<accession>P0DQE9</accession>
<sequence>MRFLVSVAFLLTVSSLLVSGENNNPVPEDPCSKEGGVCVAVDRCPDEYKKPGLCPKQKARGIDCCAIAPRDTCASRGGECTTLDCGRMEQKDVNHDCPPGTKCCVWV</sequence>
<name>TXJ1A_SCOMO</name>
<feature type="signal peptide" evidence="1">
    <location>
        <begin position="1"/>
        <end position="20"/>
    </location>
</feature>
<feature type="chain" id="PRO_0000446825" description="U-scoloptoxin(19)-Sm1a" evidence="3">
    <location>
        <begin position="21"/>
        <end position="107"/>
    </location>
</feature>